<dbReference type="EMBL" id="CP001129">
    <property type="protein sequence ID" value="ACG62384.1"/>
    <property type="molecule type" value="Genomic_DNA"/>
</dbReference>
<dbReference type="RefSeq" id="WP_012515652.1">
    <property type="nucleotide sequence ID" value="NC_011134.1"/>
</dbReference>
<dbReference type="SMR" id="B4U317"/>
<dbReference type="KEGG" id="sez:Sez_1030"/>
<dbReference type="HOGENOM" id="CLU_036856_0_1_9"/>
<dbReference type="Proteomes" id="UP000001873">
    <property type="component" value="Chromosome"/>
</dbReference>
<dbReference type="GO" id="GO:0005737">
    <property type="term" value="C:cytoplasm"/>
    <property type="evidence" value="ECO:0007669"/>
    <property type="project" value="UniProtKB-SubCell"/>
</dbReference>
<dbReference type="GO" id="GO:0016149">
    <property type="term" value="F:translation release factor activity, codon specific"/>
    <property type="evidence" value="ECO:0007669"/>
    <property type="project" value="UniProtKB-UniRule"/>
</dbReference>
<dbReference type="FunFam" id="3.30.160.20:FF:000027">
    <property type="entry name" value="Peptide chain release factor 1"/>
    <property type="match status" value="1"/>
</dbReference>
<dbReference type="FunFam" id="3.30.70.1660:FF:000002">
    <property type="entry name" value="Peptide chain release factor 1"/>
    <property type="match status" value="1"/>
</dbReference>
<dbReference type="FunFam" id="3.30.70.1660:FF:000004">
    <property type="entry name" value="Peptide chain release factor 1"/>
    <property type="match status" value="1"/>
</dbReference>
<dbReference type="Gene3D" id="3.30.160.20">
    <property type="match status" value="1"/>
</dbReference>
<dbReference type="Gene3D" id="3.30.70.1660">
    <property type="match status" value="2"/>
</dbReference>
<dbReference type="Gene3D" id="6.10.140.1950">
    <property type="match status" value="1"/>
</dbReference>
<dbReference type="HAMAP" id="MF_00093">
    <property type="entry name" value="Rel_fac_1"/>
    <property type="match status" value="1"/>
</dbReference>
<dbReference type="InterPro" id="IPR005139">
    <property type="entry name" value="PCRF"/>
</dbReference>
<dbReference type="InterPro" id="IPR000352">
    <property type="entry name" value="Pep_chain_release_fac_I"/>
</dbReference>
<dbReference type="InterPro" id="IPR045853">
    <property type="entry name" value="Pep_chain_release_fac_I_sf"/>
</dbReference>
<dbReference type="InterPro" id="IPR050057">
    <property type="entry name" value="Prokaryotic/Mito_RF"/>
</dbReference>
<dbReference type="InterPro" id="IPR004373">
    <property type="entry name" value="RF-1"/>
</dbReference>
<dbReference type="NCBIfam" id="TIGR00019">
    <property type="entry name" value="prfA"/>
    <property type="match status" value="1"/>
</dbReference>
<dbReference type="NCBIfam" id="NF001859">
    <property type="entry name" value="PRK00591.1"/>
    <property type="match status" value="1"/>
</dbReference>
<dbReference type="PANTHER" id="PTHR43804">
    <property type="entry name" value="LD18447P"/>
    <property type="match status" value="1"/>
</dbReference>
<dbReference type="PANTHER" id="PTHR43804:SF7">
    <property type="entry name" value="LD18447P"/>
    <property type="match status" value="1"/>
</dbReference>
<dbReference type="Pfam" id="PF03462">
    <property type="entry name" value="PCRF"/>
    <property type="match status" value="1"/>
</dbReference>
<dbReference type="Pfam" id="PF00472">
    <property type="entry name" value="RF-1"/>
    <property type="match status" value="1"/>
</dbReference>
<dbReference type="SMART" id="SM00937">
    <property type="entry name" value="PCRF"/>
    <property type="match status" value="1"/>
</dbReference>
<dbReference type="SUPFAM" id="SSF75620">
    <property type="entry name" value="Release factor"/>
    <property type="match status" value="1"/>
</dbReference>
<dbReference type="PROSITE" id="PS00745">
    <property type="entry name" value="RF_PROK_I"/>
    <property type="match status" value="1"/>
</dbReference>
<organism>
    <name type="scientific">Streptococcus equi subsp. zooepidemicus (strain MGCS10565)</name>
    <dbReference type="NCBI Taxonomy" id="552526"/>
    <lineage>
        <taxon>Bacteria</taxon>
        <taxon>Bacillati</taxon>
        <taxon>Bacillota</taxon>
        <taxon>Bacilli</taxon>
        <taxon>Lactobacillales</taxon>
        <taxon>Streptococcaceae</taxon>
        <taxon>Streptococcus</taxon>
    </lineage>
</organism>
<name>RF1_STREM</name>
<accession>B4U317</accession>
<comment type="function">
    <text evidence="1">Peptide chain release factor 1 directs the termination of translation in response to the peptide chain termination codons UAG and UAA.</text>
</comment>
<comment type="subcellular location">
    <subcellularLocation>
        <location evidence="1">Cytoplasm</location>
    </subcellularLocation>
</comment>
<comment type="PTM">
    <text evidence="1">Methylated by PrmC. Methylation increases the termination efficiency of RF1.</text>
</comment>
<comment type="similarity">
    <text evidence="1">Belongs to the prokaryotic/mitochondrial release factor family.</text>
</comment>
<gene>
    <name evidence="1" type="primary">prfA</name>
    <name type="ordered locus">Sez_1030</name>
</gene>
<sequence>MNIYDQLQAVEDRYEELGELLSDPEVVSDTKRFMALSKEEASTRETVAAYRQYKAIIQSIDDAEEMIKEAGGDPDIEEMAKEELKEAKAAKETYEDKLKLLLLPKDPNDDKNIILEIRGAAGGDEAALFAGDLLAMYQKFAESQGWRFEVMEASYNGVGGIKEVVAMVSGQSVYSKLKYESGAHRVQRVPVTESQGRVHTSTATVLVMPEVEEVEYDIDPKDLRIDIYHASGAGGQNVNKVATAVRIVHLPTNIKVEMQEERTQQKNRDKAMKIIRARVADHFAQIAQDEQDAERKSTIGTGDRSERIRTYNFPQNRVTDHRIGLTLQKLDTILSGKLDEIVDALVLYDQTQKLESLNNQ</sequence>
<proteinExistence type="inferred from homology"/>
<feature type="chain" id="PRO_1000093507" description="Peptide chain release factor 1">
    <location>
        <begin position="1"/>
        <end position="360"/>
    </location>
</feature>
<feature type="region of interest" description="Disordered" evidence="2">
    <location>
        <begin position="288"/>
        <end position="308"/>
    </location>
</feature>
<feature type="compositionally biased region" description="Basic and acidic residues" evidence="2">
    <location>
        <begin position="293"/>
        <end position="308"/>
    </location>
</feature>
<feature type="modified residue" description="N5-methylglutamine" evidence="1">
    <location>
        <position position="236"/>
    </location>
</feature>
<keyword id="KW-0963">Cytoplasm</keyword>
<keyword id="KW-0488">Methylation</keyword>
<keyword id="KW-0648">Protein biosynthesis</keyword>
<evidence type="ECO:0000255" key="1">
    <source>
        <dbReference type="HAMAP-Rule" id="MF_00093"/>
    </source>
</evidence>
<evidence type="ECO:0000256" key="2">
    <source>
        <dbReference type="SAM" id="MobiDB-lite"/>
    </source>
</evidence>
<reference key="1">
    <citation type="journal article" date="2008" name="PLoS ONE">
        <title>Genome sequence of a lancefield group C Streptococcus zooepidemicus strain causing epidemic nephritis: new information about an old disease.</title>
        <authorList>
            <person name="Beres S.B."/>
            <person name="Sesso R."/>
            <person name="Pinto S.W.L."/>
            <person name="Hoe N.P."/>
            <person name="Porcella S.F."/>
            <person name="Deleo F.R."/>
            <person name="Musser J.M."/>
        </authorList>
    </citation>
    <scope>NUCLEOTIDE SEQUENCE [LARGE SCALE GENOMIC DNA]</scope>
    <source>
        <strain>MGCS10565</strain>
    </source>
</reference>
<protein>
    <recommendedName>
        <fullName evidence="1">Peptide chain release factor 1</fullName>
        <shortName evidence="1">RF-1</shortName>
    </recommendedName>
</protein>